<organism>
    <name type="scientific">Streptomyces coelicolor (strain ATCC BAA-471 / A3(2) / M145)</name>
    <dbReference type="NCBI Taxonomy" id="100226"/>
    <lineage>
        <taxon>Bacteria</taxon>
        <taxon>Bacillati</taxon>
        <taxon>Actinomycetota</taxon>
        <taxon>Actinomycetes</taxon>
        <taxon>Kitasatosporales</taxon>
        <taxon>Streptomycetaceae</taxon>
        <taxon>Streptomyces</taxon>
        <taxon>Streptomyces albidoflavus group</taxon>
    </lineage>
</organism>
<sequence>MSCGEPHETDCSEILDHLYEFLDKEMPDSDCVKFEHHFEECSPCLEKYGLEQAVKKLVKRCCGQDDVPGDLRAKVMGRLDLIRSGQSVPEHDVAAAPSSSAPQES</sequence>
<keyword id="KW-0002">3D-structure</keyword>
<keyword id="KW-1015">Disulfide bond</keyword>
<keyword id="KW-0479">Metal-binding</keyword>
<keyword id="KW-0676">Redox-active center</keyword>
<keyword id="KW-1185">Reference proteome</keyword>
<keyword id="KW-0749">Sporulation</keyword>
<keyword id="KW-0804">Transcription</keyword>
<keyword id="KW-0805">Transcription regulation</keyword>
<keyword id="KW-0862">Zinc</keyword>
<evidence type="ECO:0000256" key="1">
    <source>
        <dbReference type="SAM" id="MobiDB-lite"/>
    </source>
</evidence>
<evidence type="ECO:0000269" key="2">
    <source>
    </source>
</evidence>
<evidence type="ECO:0000269" key="3">
    <source>
    </source>
</evidence>
<evidence type="ECO:0000269" key="4">
    <source>
    </source>
</evidence>
<evidence type="ECO:0000269" key="5">
    <source>
    </source>
</evidence>
<evidence type="ECO:0000269" key="6">
    <source>
    </source>
</evidence>
<evidence type="ECO:0000269" key="7">
    <source>
    </source>
</evidence>
<evidence type="ECO:0000269" key="8">
    <source>
    </source>
</evidence>
<evidence type="ECO:0000305" key="9"/>
<evidence type="ECO:0007829" key="10">
    <source>
        <dbReference type="PDB" id="5FRF"/>
    </source>
</evidence>
<evidence type="ECO:0007829" key="11">
    <source>
        <dbReference type="PDB" id="5FRH"/>
    </source>
</evidence>
<feature type="chain" id="PRO_0000423652" description="Anti-sigma factor RsrA">
    <location>
        <begin position="1"/>
        <end position="105"/>
    </location>
</feature>
<feature type="region of interest" description="Contributes to redox-sensitivity">
    <location>
        <begin position="33"/>
        <end position="47"/>
    </location>
</feature>
<feature type="region of interest" description="Disordered" evidence="1">
    <location>
        <begin position="86"/>
        <end position="105"/>
    </location>
</feature>
<feature type="compositionally biased region" description="Low complexity" evidence="1">
    <location>
        <begin position="94"/>
        <end position="105"/>
    </location>
</feature>
<feature type="binding site">
    <location>
        <position position="11"/>
    </location>
    <ligand>
        <name>Zn(2+)</name>
        <dbReference type="ChEBI" id="CHEBI:29105"/>
    </ligand>
</feature>
<feature type="binding site" evidence="9">
    <location>
        <position position="37"/>
    </location>
    <ligand>
        <name>Zn(2+)</name>
        <dbReference type="ChEBI" id="CHEBI:29105"/>
    </ligand>
</feature>
<feature type="binding site">
    <location>
        <position position="41"/>
    </location>
    <ligand>
        <name>Zn(2+)</name>
        <dbReference type="ChEBI" id="CHEBI:29105"/>
    </ligand>
</feature>
<feature type="binding site">
    <location>
        <position position="44"/>
    </location>
    <ligand>
        <name>Zn(2+)</name>
        <dbReference type="ChEBI" id="CHEBI:29105"/>
    </ligand>
</feature>
<feature type="disulfide bond" description="Or C-11 with C-41 (about 25%)" evidence="5">
    <location>
        <begin position="11"/>
        <end position="44"/>
    </location>
</feature>
<feature type="mutagenesis site" description="No effect on sporulation, normal induction of trxCp1." evidence="3">
    <original>C</original>
    <variation>S</variation>
    <location>
        <position position="3"/>
    </location>
</feature>
<feature type="mutagenesis site" description="No sporulation, constitutive expression of trxCp1, no binding of SigR." evidence="3">
    <original>C</original>
    <variation>S</variation>
    <location>
        <position position="11"/>
    </location>
</feature>
<feature type="mutagenesis site" description="No effect on sporulation, normal induction of trxCp1." evidence="3">
    <original>C</original>
    <variation>S</variation>
    <location>
        <position position="31"/>
    </location>
</feature>
<feature type="mutagenesis site" description="Inhibits SigR, no diamide induction. A swap mutant with RsiW of B.subtilis." evidence="8">
    <original>KFEHHFEECSPCLEK</original>
    <variation>VLNEHLETCEKCRKH</variation>
    <location>
        <begin position="33"/>
        <end position="47"/>
    </location>
</feature>
<feature type="mutagenesis site" description="No sporulation, constitutive disulfide reductase (trxB) activity. No inhibition of SigR, no diamide induction of SigR. Binds SigR in vitro." evidence="6 8">
    <original>H</original>
    <variation>A</variation>
    <location>
        <position position="37"/>
    </location>
</feature>
<feature type="mutagenesis site" description="No inhibition of SigR, no diamide induction of SigR." evidence="8">
    <original>F</original>
    <variation>A</variation>
    <location>
        <position position="38"/>
    </location>
</feature>
<feature type="mutagenesis site" description="Wild-type inhibition of SigR, more induction by diamide." evidence="8">
    <original>E</original>
    <variation>A</variation>
    <location>
        <position position="39"/>
    </location>
</feature>
<feature type="mutagenesis site" description="Wild-type inhibition of SigR, more induction by diamide." evidence="8">
    <original>E</original>
    <variation>A</variation>
    <location>
        <position position="40"/>
    </location>
</feature>
<feature type="mutagenesis site" description="No inhibition of SigR, no diamide induction of SigR." evidence="3 8">
    <original>C</original>
    <variation>A</variation>
    <location>
        <position position="41"/>
    </location>
</feature>
<feature type="mutagenesis site" description="No sporulation, constitutive expression of trxCp1, no binding of SigR." evidence="3 8">
    <original>C</original>
    <variation>S</variation>
    <location>
        <position position="41"/>
    </location>
</feature>
<feature type="mutagenesis site" description="Decreases basal levels of SigR and its induction by diamide; may bind it more tightly." evidence="8">
    <original>P</original>
    <variation>A</variation>
    <location>
        <position position="43"/>
    </location>
</feature>
<feature type="mutagenesis site" description="No inhibition of SigR, no diamide induction of SigR." evidence="3 8">
    <original>C</original>
    <variation>A</variation>
    <location>
        <position position="44"/>
    </location>
</feature>
<feature type="mutagenesis site" description="No sporulation, constitutive expression of trxCp1, no binding of SigR." evidence="3 8">
    <original>C</original>
    <variation>S</variation>
    <location>
        <position position="44"/>
    </location>
</feature>
<feature type="mutagenesis site" description="Wild-type inhibition of SigR, more induction by diamide." evidence="8">
    <original>L</original>
    <variation>A</variation>
    <location>
        <position position="45"/>
    </location>
</feature>
<feature type="mutagenesis site" description="Wild-type inhibition of SigR, more induction by diamide." evidence="8">
    <original>E</original>
    <variation>A</variation>
    <location>
        <position position="46"/>
    </location>
</feature>
<feature type="mutagenesis site" description="No effect on sporulation, normal induction of trxCp1." evidence="3">
    <original>C</original>
    <variation>S</variation>
    <location>
        <position position="61"/>
    </location>
</feature>
<feature type="mutagenesis site" description="Reduced sporulation, normal induction of trxCp1, no binding of SigR." evidence="3">
    <original>C</original>
    <variation>S</variation>
    <location>
        <position position="62"/>
    </location>
</feature>
<feature type="helix" evidence="10">
    <location>
        <begin position="11"/>
        <end position="24"/>
    </location>
</feature>
<feature type="helix" evidence="10">
    <location>
        <begin position="28"/>
        <end position="31"/>
    </location>
</feature>
<feature type="helix" evidence="10">
    <location>
        <begin position="35"/>
        <end position="38"/>
    </location>
</feature>
<feature type="helix" evidence="11">
    <location>
        <begin position="42"/>
        <end position="44"/>
    </location>
</feature>
<feature type="strand" evidence="10">
    <location>
        <begin position="46"/>
        <end position="49"/>
    </location>
</feature>
<feature type="helix" evidence="10">
    <location>
        <begin position="51"/>
        <end position="60"/>
    </location>
</feature>
<feature type="strand" evidence="10">
    <location>
        <begin position="61"/>
        <end position="63"/>
    </location>
</feature>
<feature type="helix" evidence="10">
    <location>
        <begin position="71"/>
        <end position="75"/>
    </location>
</feature>
<feature type="helix" evidence="10">
    <location>
        <begin position="77"/>
        <end position="84"/>
    </location>
</feature>
<feature type="turn" evidence="10">
    <location>
        <begin position="87"/>
        <end position="89"/>
    </location>
</feature>
<feature type="strand" evidence="10">
    <location>
        <begin position="91"/>
        <end position="95"/>
    </location>
</feature>
<comment type="function">
    <text evidence="2 3 4 5 7">A redox-regulated anti-sigma factor for extracytoplasmic function (ECF) sigma factor SigR, and a key sensor of disulfide stress. Holds SigR, its cognate ECF sigma factor, in an inactive form, inhibiting its sigma activity under reducing but not oxidizing conditions; oxidation and reduction of the anti-sigma factor is reversible. Mycothiol (MSH) is competent for reduction of RsrA, allowing it to bind to SigR. In conjunction with its cognate sigma factor SigR may sense the intracellular level of reduced MSH. Probably releases SigR during oxidative stress.</text>
</comment>
<comment type="cofactor">
    <cofactor evidence="3 5">
        <name>Zn(2+)</name>
        <dbReference type="ChEBI" id="CHEBI:29105"/>
    </cofactor>
    <text evidence="3 5">Binds 1 Zn(2+) per subunit. Zinc is not required for SigR-binding, but is required for anti-sigma factor activity. Zinc-binding renders RsrA relatively resistant to oxidation.</text>
</comment>
<comment type="subunit">
    <text evidence="2 4 5">Interacts with cognate sigma factor SigR under reducing but not oxiding conditions. Treatment with the thiol-oxidzing agent diamide inhibits the interaction, while incubation with thioredoxin (trxA) stimulates the interaction.</text>
</comment>
<comment type="PTM">
    <text>Under oxidizing conditions up to 3 disulfide bonds are formed. A single disulfide bond inhibits binding to SigR. Cys-11 forms a disulfide bond with either Cys-44 (the major bind) or Cys-41 (a minor bond).</text>
</comment>
<comment type="mass spectrometry">
    <text>Partially alkylated with iodoacetamide, has 1 disulfide bond.</text>
</comment>
<comment type="mass spectrometry">
    <text>Full alkylated with iodoacetamide.</text>
</comment>
<comment type="disruption phenotype">
    <text evidence="3">Viable, but defective in sporulation, white color. Strong induction of disulfide reductase (trxB) and thioredoxin-2 (trxC) that is not further induced by diamide. Acts as a SigR constitutive mutant. A double sigR-rsrA mutant sporulates normally but is more sensitive to diamide.</text>
</comment>
<comment type="miscellaneous">
    <text>A quadruple Cys-3-Ser, Cys-31-Ser, Cys-61-Ala, Cys-62-Ala mutant has anti-sigma factor activity and is induced by diamide.</text>
</comment>
<comment type="similarity">
    <text evidence="9">Belongs to the zinc-associated anti-sigma factor (ZAS) superfamily.</text>
</comment>
<reference key="1">
    <citation type="journal article" date="1999" name="EMBO J.">
        <title>RsrA, an anti-sigma factor regulated by redox change.</title>
        <authorList>
            <person name="Kang J.G."/>
            <person name="Paget M.S.B."/>
            <person name="Seok Y.J."/>
            <person name="Hahn M.Y."/>
            <person name="Bae J.B."/>
            <person name="Hahn J.S."/>
        </authorList>
    </citation>
    <scope>NUCLEOTIDE SEQUENCE [GENOMIC DNA]</scope>
    <scope>FUNCTION AS AN ANTI-SIGMA FACTOR</scope>
    <scope>INTERACTION WITH SIGR</scope>
    <scope>SUBUNIT</scope>
    <scope>POSSIBLE DISULFIDE BONDS</scope>
    <source>
        <strain>ATCC BAA-471 / A3(2) / M145</strain>
    </source>
</reference>
<reference key="2">
    <citation type="journal article" date="2002" name="Nature">
        <title>Complete genome sequence of the model actinomycete Streptomyces coelicolor A3(2).</title>
        <authorList>
            <person name="Bentley S.D."/>
            <person name="Chater K.F."/>
            <person name="Cerdeno-Tarraga A.-M."/>
            <person name="Challis G.L."/>
            <person name="Thomson N.R."/>
            <person name="James K.D."/>
            <person name="Harris D.E."/>
            <person name="Quail M.A."/>
            <person name="Kieser H."/>
            <person name="Harper D."/>
            <person name="Bateman A."/>
            <person name="Brown S."/>
            <person name="Chandra G."/>
            <person name="Chen C.W."/>
            <person name="Collins M."/>
            <person name="Cronin A."/>
            <person name="Fraser A."/>
            <person name="Goble A."/>
            <person name="Hidalgo J."/>
            <person name="Hornsby T."/>
            <person name="Howarth S."/>
            <person name="Huang C.-H."/>
            <person name="Kieser T."/>
            <person name="Larke L."/>
            <person name="Murphy L.D."/>
            <person name="Oliver K."/>
            <person name="O'Neil S."/>
            <person name="Rabbinowitsch E."/>
            <person name="Rajandream M.A."/>
            <person name="Rutherford K.M."/>
            <person name="Rutter S."/>
            <person name="Seeger K."/>
            <person name="Saunders D."/>
            <person name="Sharp S."/>
            <person name="Squares R."/>
            <person name="Squares S."/>
            <person name="Taylor K."/>
            <person name="Warren T."/>
            <person name="Wietzorrek A."/>
            <person name="Woodward J.R."/>
            <person name="Barrell B.G."/>
            <person name="Parkhill J."/>
            <person name="Hopwood D.A."/>
        </authorList>
    </citation>
    <scope>NUCLEOTIDE SEQUENCE [LARGE SCALE GENOMIC DNA]</scope>
    <source>
        <strain>ATCC BAA-471 / A3(2) / M145</strain>
    </source>
</reference>
<reference key="3">
    <citation type="journal article" date="2001" name="Mol. Microbiol.">
        <title>Mutational analysis of RsrA, a zinc-binding anti-sigma factor with a thiol-disulphide redox switch.</title>
        <authorList>
            <person name="Paget M.S."/>
            <person name="Bae J.B."/>
            <person name="Hahn M.Y."/>
            <person name="Li W."/>
            <person name="Kleanthous C."/>
            <person name="Roe J.H."/>
            <person name="Buttner M.J."/>
        </authorList>
    </citation>
    <scope>FUNCTION AS A DISULFIDE STRESS SENSOR</scope>
    <scope>COFACTOR</scope>
    <scope>DISRUPTION PHENOTYPE</scope>
    <scope>MUTAGENESIS OF CYS-3; CYS-11; CYS-31; CYS-41; CYS-44; CYS-61 AND CYS-62</scope>
    <source>
        <strain>ATCC BAA-471 / A3(2) / M145</strain>
    </source>
</reference>
<reference key="4">
    <citation type="journal article" date="2002" name="J. Mol. Biol.">
        <title>Identification and structure of the anti-sigma factor-binding domain of the disulphide-stress regulated sigma factor sigma(R) from Streptomyces coelicolor.</title>
        <authorList>
            <person name="Li W."/>
            <person name="Stevenson C.E."/>
            <person name="Burton N."/>
            <person name="Jakimowicz P."/>
            <person name="Paget M.S."/>
            <person name="Buttner M.J."/>
            <person name="Lawson D.M."/>
            <person name="Kleanthous C."/>
        </authorList>
    </citation>
    <scope>FUNCTION AS AN ANTI-SIGMA FACTOR</scope>
    <scope>INTERACTION WITH SIGR</scope>
    <source>
        <strain>ATCC BAA-471 / A3(2) / M145</strain>
    </source>
</reference>
<reference key="5">
    <citation type="journal article" date="2003" name="J. Mol. Biol.">
        <title>The role of zinc in the disulphide stress-regulated anti-sigma factor RsrA from Streptomyces coelicolor.</title>
        <authorList>
            <person name="Li W."/>
            <person name="Bottrill A.R."/>
            <person name="Bibb M.J."/>
            <person name="Buttner M.J."/>
            <person name="Paget M.S."/>
            <person name="Kleanthous C."/>
        </authorList>
    </citation>
    <scope>FUNCTION AS AN ANTI-SIGMA FACTOR</scope>
    <scope>INTERACTION WITH SIGR</scope>
    <scope>COFACTOR</scope>
    <scope>DISULFIDE BOND</scope>
    <scope>MASS SPECTROMETRY</scope>
    <source>
        <strain>ATCC BAA-471 / A3(2) / M145</strain>
    </source>
</reference>
<reference key="6">
    <citation type="journal article" date="2006" name="Biochemistry">
        <title>Assignment of the zinc ligands in RsrA, a redox-sensing ZAS protein from Streptomyces coelicolor.</title>
        <authorList>
            <person name="Zdanowski K."/>
            <person name="Doughty P."/>
            <person name="Jakimowicz P."/>
            <person name="O'Hara L."/>
            <person name="Buttner M.J."/>
            <person name="Paget M.S."/>
            <person name="Kleanthous C."/>
        </authorList>
    </citation>
    <scope>ZINC-BINDING</scope>
    <scope>MUTAGENESIS OF HIS-37</scope>
    <source>
        <strain>ATCC BAA-471 / A3(2) / M145</strain>
    </source>
</reference>
<reference key="7">
    <citation type="journal article" date="2008" name="Mol. Microbiol.">
        <title>Mycothiol regulates and is regulated by a thiol-specific antisigma factor RsrA and sigma(R) in Streptomyces coelicolor.</title>
        <authorList>
            <person name="Park J.H."/>
            <person name="Roe J.H."/>
        </authorList>
    </citation>
    <scope>FUNCTION</scope>
    <scope>REDUCTION BY MYCOTHIOL</scope>
    <source>
        <strain>ATCC BAA-471 / A3(2) / M145</strain>
    </source>
</reference>
<reference key="8">
    <citation type="journal article" date="2011" name="Nucleic Acids Res.">
        <title>Determinants of redox sensitivity in RsrA, a zinc-containing anti-sigma factor for regulating thiol oxidative stress response.</title>
        <authorList>
            <person name="Jung Y.G."/>
            <person name="Cho Y.B."/>
            <person name="Kim M.S."/>
            <person name="Yoo J.S."/>
            <person name="Hong S.H."/>
            <person name="Roe J.H."/>
        </authorList>
    </citation>
    <scope>MUTAGENESIS OF 33-LYS--LYS-47; HIS-37; PHE-38; GLU-39; GLU-40; CYS-41; PRO-43; CYS-44; LEU-45 AND GLU-46</scope>
    <source>
        <strain>ATCC BAA-471 / A3(2) / M145</strain>
    </source>
</reference>
<dbReference type="EMBL" id="AJ010320">
    <property type="protein sequence ID" value="CAB61633.1"/>
    <property type="molecule type" value="Genomic_DNA"/>
</dbReference>
<dbReference type="EMBL" id="AL939122">
    <property type="protein sequence ID" value="CAB94602.1"/>
    <property type="molecule type" value="Genomic_DNA"/>
</dbReference>
<dbReference type="RefSeq" id="NP_629364.1">
    <property type="nucleotide sequence ID" value="NC_003888.3"/>
</dbReference>
<dbReference type="RefSeq" id="WP_003973755.1">
    <property type="nucleotide sequence ID" value="NZ_VNID01000008.1"/>
</dbReference>
<dbReference type="PDB" id="5FRF">
    <property type="method" value="NMR"/>
    <property type="chains" value="A=1-105"/>
</dbReference>
<dbReference type="PDB" id="5FRH">
    <property type="method" value="NMR"/>
    <property type="chains" value="A=1-105"/>
</dbReference>
<dbReference type="PDBsum" id="5FRF"/>
<dbReference type="PDBsum" id="5FRH"/>
<dbReference type="SMR" id="Q7AKG8"/>
<dbReference type="FunCoup" id="Q7AKG8">
    <property type="interactions" value="2"/>
</dbReference>
<dbReference type="STRING" id="100226.gene:17762868"/>
<dbReference type="PaxDb" id="100226-SCO5217"/>
<dbReference type="GeneID" id="91383808"/>
<dbReference type="KEGG" id="sco:SCO5217"/>
<dbReference type="PATRIC" id="fig|100226.15.peg.5301"/>
<dbReference type="eggNOG" id="COG5662">
    <property type="taxonomic scope" value="Bacteria"/>
</dbReference>
<dbReference type="HOGENOM" id="CLU_155928_0_0_11"/>
<dbReference type="InParanoid" id="Q7AKG8"/>
<dbReference type="OrthoDB" id="3267840at2"/>
<dbReference type="PhylomeDB" id="Q7AKG8"/>
<dbReference type="Proteomes" id="UP000001973">
    <property type="component" value="Chromosome"/>
</dbReference>
<dbReference type="GO" id="GO:0016989">
    <property type="term" value="F:sigma factor antagonist activity"/>
    <property type="evidence" value="ECO:0000314"/>
    <property type="project" value="UniProtKB"/>
</dbReference>
<dbReference type="GO" id="GO:0008270">
    <property type="term" value="F:zinc ion binding"/>
    <property type="evidence" value="ECO:0000315"/>
    <property type="project" value="UniProtKB"/>
</dbReference>
<dbReference type="GO" id="GO:0051776">
    <property type="term" value="P:detection of redox state"/>
    <property type="evidence" value="ECO:0000315"/>
    <property type="project" value="UniProtKB"/>
</dbReference>
<dbReference type="GO" id="GO:0051775">
    <property type="term" value="P:response to redox state"/>
    <property type="evidence" value="ECO:0000314"/>
    <property type="project" value="UniProtKB"/>
</dbReference>
<dbReference type="GO" id="GO:0043934">
    <property type="term" value="P:sporulation"/>
    <property type="evidence" value="ECO:0000315"/>
    <property type="project" value="UniProtKB"/>
</dbReference>
<dbReference type="GO" id="GO:0030435">
    <property type="term" value="P:sporulation resulting in formation of a cellular spore"/>
    <property type="evidence" value="ECO:0007669"/>
    <property type="project" value="UniProtKB-KW"/>
</dbReference>
<dbReference type="InterPro" id="IPR024020">
    <property type="entry name" value="Anit_sigma_mycothiol_RsrA"/>
</dbReference>
<dbReference type="InterPro" id="IPR027383">
    <property type="entry name" value="Znf_put"/>
</dbReference>
<dbReference type="NCBIfam" id="TIGR03988">
    <property type="entry name" value="antisig_RsrA"/>
    <property type="match status" value="1"/>
</dbReference>
<dbReference type="Pfam" id="PF13490">
    <property type="entry name" value="zf-HC2"/>
    <property type="match status" value="1"/>
</dbReference>
<name>RSRA_STRCO</name>
<gene>
    <name type="primary">rsrA</name>
    <name type="ordered locus">SCO5217</name>
</gene>
<proteinExistence type="evidence at protein level"/>
<protein>
    <recommendedName>
        <fullName>Anti-sigma factor RsrA</fullName>
    </recommendedName>
    <alternativeName>
        <fullName>Regulator of SigR</fullName>
    </alternativeName>
    <alternativeName>
        <fullName>Sigma-R anti-sigma factor RsrA</fullName>
    </alternativeName>
</protein>
<accession>Q7AKG8</accession>
<accession>Q9RL96</accession>